<name>DFRA_GERHY</name>
<proteinExistence type="evidence at transcript level"/>
<feature type="chain" id="PRO_0000215566" description="Dihydroflavonol 4-reductase">
    <location>
        <begin position="1"/>
        <end position="366"/>
    </location>
</feature>
<feature type="binding site" evidence="1">
    <location>
        <position position="45"/>
    </location>
    <ligand>
        <name>NADP(+)</name>
        <dbReference type="ChEBI" id="CHEBI:58349"/>
    </ligand>
</feature>
<feature type="binding site" evidence="1">
    <location>
        <position position="164"/>
    </location>
    <ligand>
        <name>NADP(+)</name>
        <dbReference type="ChEBI" id="CHEBI:58349"/>
    </ligand>
</feature>
<comment type="function">
    <text evidence="2">Bifunctional enzyme involved in flavonoid metabolism.</text>
</comment>
<comment type="catalytic activity">
    <reaction evidence="2">
        <text>a (2R,3S,4S)-leucoanthocyanidin + NADP(+) = a (2R,3R)-dihydroflavonol + NADPH + H(+)</text>
        <dbReference type="Rhea" id="RHEA:54444"/>
        <dbReference type="ChEBI" id="CHEBI:15378"/>
        <dbReference type="ChEBI" id="CHEBI:57783"/>
        <dbReference type="ChEBI" id="CHEBI:58349"/>
        <dbReference type="ChEBI" id="CHEBI:138176"/>
        <dbReference type="ChEBI" id="CHEBI:138188"/>
        <dbReference type="EC" id="1.1.1.219"/>
    </reaction>
</comment>
<comment type="catalytic activity">
    <reaction evidence="2">
        <text>(2S)-flavan-4-ol + NADP(+) = (2S)-flavanone + NADPH + H(+)</text>
        <dbReference type="Rhea" id="RHEA:11228"/>
        <dbReference type="ChEBI" id="CHEBI:15378"/>
        <dbReference type="ChEBI" id="CHEBI:15605"/>
        <dbReference type="ChEBI" id="CHEBI:15606"/>
        <dbReference type="ChEBI" id="CHEBI:57783"/>
        <dbReference type="ChEBI" id="CHEBI:58349"/>
        <dbReference type="EC" id="1.1.1.234"/>
    </reaction>
</comment>
<comment type="pathway">
    <text>Pigment biosynthesis; anthocyanin biosynthesis.</text>
</comment>
<comment type="similarity">
    <text evidence="3">Belongs to the NAD(P)-dependent epimerase/dehydratase family. Dihydroflavonol-4-reductase subfamily.</text>
</comment>
<organism>
    <name type="scientific">Gerbera hybrida</name>
    <name type="common">Daisy</name>
    <dbReference type="NCBI Taxonomy" id="18101"/>
    <lineage>
        <taxon>Eukaryota</taxon>
        <taxon>Viridiplantae</taxon>
        <taxon>Streptophyta</taxon>
        <taxon>Embryophyta</taxon>
        <taxon>Tracheophyta</taxon>
        <taxon>Spermatophyta</taxon>
        <taxon>Magnoliopsida</taxon>
        <taxon>eudicotyledons</taxon>
        <taxon>Gunneridae</taxon>
        <taxon>Pentapetalae</taxon>
        <taxon>asterids</taxon>
        <taxon>campanulids</taxon>
        <taxon>Asterales</taxon>
        <taxon>Asteraceae</taxon>
        <taxon>Mutisioideae</taxon>
        <taxon>Mutisieae</taxon>
        <taxon>Gerbera</taxon>
    </lineage>
</organism>
<sequence>MEEDSPATVCVTGAAGFIGSWLVMRLLERGYVVHATVRDPGDLKKVKHLLELPKAQTNLKLWKADLTQEGSFDEAIQGCHGVFHLATPMDFESKDPENEIIKPTIEGVLSIIRSCVKAKTVKKLVFTSSAGTVNGQEKQLHVYDESHWSDLDFIYSKKMTAWMYFVSKTLAEKAAWDATKGNNISFISIIPTLVVGPFITSTFPPSLVTALSLITGNEAHYSIIKQGQYVHLDDLCECHIYLYENPKAKGRYICSSHDATIHQLAKIIKDKWPEYYIPTKFPGIDEELPIVSFSSKKLIDTGFEFKYNLEDMFKGAIDTCREKGLLPYSTIKNHINGNHVNGVHHYIKNNDDDHEKGLLCCSKEGQ</sequence>
<reference key="1">
    <citation type="journal article" date="1993" name="Plant Mol. Biol.">
        <title>Cloning of cDNA coding for dihydroflavonol-4-reductase (DFR) and characterization of dfr expression in the corollas of Gerbera hybrida var. Regina (Compositae).</title>
        <authorList>
            <person name="Helariutta Y."/>
            <person name="Elomaa P."/>
            <person name="Kotilainen M."/>
            <person name="Seppanen P."/>
            <person name="Teeri T.H."/>
        </authorList>
    </citation>
    <scope>NUCLEOTIDE SEQUENCE [MRNA]</scope>
    <source>
        <strain>cv. Regina</strain>
        <tissue>Corolla</tissue>
    </source>
</reference>
<gene>
    <name type="primary">DFR</name>
</gene>
<keyword id="KW-0284">Flavonoid biosynthesis</keyword>
<keyword id="KW-0521">NADP</keyword>
<keyword id="KW-0560">Oxidoreductase</keyword>
<accession>P51105</accession>
<dbReference type="EC" id="1.1.1.219" evidence="2"/>
<dbReference type="EC" id="1.1.1.234" evidence="2"/>
<dbReference type="EMBL" id="Z17221">
    <property type="protein sequence ID" value="CAA78930.1"/>
    <property type="molecule type" value="mRNA"/>
</dbReference>
<dbReference type="PIR" id="S35189">
    <property type="entry name" value="S35189"/>
</dbReference>
<dbReference type="SMR" id="P51105"/>
<dbReference type="BRENDA" id="1.1.1.219">
    <property type="organism ID" value="2420"/>
</dbReference>
<dbReference type="UniPathway" id="UPA00009"/>
<dbReference type="GO" id="GO:0045552">
    <property type="term" value="F:dihydrokaempferol 4-reductase activity"/>
    <property type="evidence" value="ECO:0007669"/>
    <property type="project" value="UniProtKB-EC"/>
</dbReference>
<dbReference type="GO" id="GO:0047890">
    <property type="term" value="F:flavanone 4-reductase activity"/>
    <property type="evidence" value="ECO:0007669"/>
    <property type="project" value="UniProtKB-EC"/>
</dbReference>
<dbReference type="GO" id="GO:0009718">
    <property type="term" value="P:anthocyanin-containing compound biosynthetic process"/>
    <property type="evidence" value="ECO:0007669"/>
    <property type="project" value="UniProtKB-UniPathway"/>
</dbReference>
<dbReference type="CDD" id="cd08958">
    <property type="entry name" value="FR_SDR_e"/>
    <property type="match status" value="1"/>
</dbReference>
<dbReference type="FunFam" id="3.40.50.720:FF:000085">
    <property type="entry name" value="Dihydroflavonol reductase"/>
    <property type="match status" value="1"/>
</dbReference>
<dbReference type="Gene3D" id="3.40.50.720">
    <property type="entry name" value="NAD(P)-binding Rossmann-like Domain"/>
    <property type="match status" value="1"/>
</dbReference>
<dbReference type="InterPro" id="IPR001509">
    <property type="entry name" value="Epimerase_deHydtase"/>
</dbReference>
<dbReference type="InterPro" id="IPR036291">
    <property type="entry name" value="NAD(P)-bd_dom_sf"/>
</dbReference>
<dbReference type="InterPro" id="IPR050425">
    <property type="entry name" value="NAD(P)_dehydrat-like"/>
</dbReference>
<dbReference type="PANTHER" id="PTHR10366">
    <property type="entry name" value="NAD DEPENDENT EPIMERASE/DEHYDRATASE"/>
    <property type="match status" value="1"/>
</dbReference>
<dbReference type="PANTHER" id="PTHR10366:SF564">
    <property type="entry name" value="STEROL-4-ALPHA-CARBOXYLATE 3-DEHYDROGENASE, DECARBOXYLATING"/>
    <property type="match status" value="1"/>
</dbReference>
<dbReference type="Pfam" id="PF01370">
    <property type="entry name" value="Epimerase"/>
    <property type="match status" value="1"/>
</dbReference>
<dbReference type="SUPFAM" id="SSF51735">
    <property type="entry name" value="NAD(P)-binding Rossmann-fold domains"/>
    <property type="match status" value="1"/>
</dbReference>
<protein>
    <recommendedName>
        <fullName>Dihydroflavonol 4-reductase</fullName>
        <shortName>DFR</shortName>
        <ecNumber evidence="2">1.1.1.219</ecNumber>
    </recommendedName>
    <alternativeName>
        <fullName>Dihydrokaempferol 4-reductase</fullName>
    </alternativeName>
    <alternativeName>
        <fullName>Flavanone 4-reductase</fullName>
        <shortName>FNR</shortName>
        <ecNumber evidence="2">1.1.1.234</ecNumber>
    </alternativeName>
</protein>
<evidence type="ECO:0000250" key="1">
    <source>
        <dbReference type="UniProtKB" id="A0A059TC02"/>
    </source>
</evidence>
<evidence type="ECO:0000250" key="2">
    <source>
        <dbReference type="UniProtKB" id="Q9XES5"/>
    </source>
</evidence>
<evidence type="ECO:0000305" key="3"/>